<keyword id="KW-0012">Acyltransferase</keyword>
<keyword id="KW-1185">Reference proteome</keyword>
<keyword id="KW-0808">Transferase</keyword>
<reference key="1">
    <citation type="journal article" date="2003" name="Proc. Natl. Acad. Sci. U.S.A.">
        <title>Complete genome sequence and analysis of Wolinella succinogenes.</title>
        <authorList>
            <person name="Baar C."/>
            <person name="Eppinger M."/>
            <person name="Raddatz G."/>
            <person name="Simon J."/>
            <person name="Lanz C."/>
            <person name="Klimmek O."/>
            <person name="Nandakumar R."/>
            <person name="Gross R."/>
            <person name="Rosinus A."/>
            <person name="Keller H."/>
            <person name="Jagtap P."/>
            <person name="Linke B."/>
            <person name="Meyer F."/>
            <person name="Lederer H."/>
            <person name="Schuster S.C."/>
        </authorList>
    </citation>
    <scope>NUCLEOTIDE SEQUENCE [LARGE SCALE GENOMIC DNA]</scope>
    <source>
        <strain>ATCC 29543 / DSM 1740 / CCUG 13145 / JCM 31913 / LMG 7466 / NCTC 11488 / FDC 602W</strain>
    </source>
</reference>
<protein>
    <recommendedName>
        <fullName>L-2,4-diaminobutyric acid acetyltransferase</fullName>
        <shortName>DABA acetyltransferase</shortName>
        <ecNumber>2.3.1.178</ecNumber>
    </recommendedName>
</protein>
<feature type="chain" id="PRO_0000220096" description="L-2,4-diaminobutyric acid acetyltransferase">
    <location>
        <begin position="1"/>
        <end position="173"/>
    </location>
</feature>
<feature type="domain" description="N-acetyltransferase" evidence="2">
    <location>
        <begin position="1"/>
        <end position="148"/>
    </location>
</feature>
<gene>
    <name type="primary">ectA</name>
    <name type="ordered locus">WS0854</name>
</gene>
<dbReference type="EC" id="2.3.1.178"/>
<dbReference type="EMBL" id="BX571659">
    <property type="protein sequence ID" value="CAE09964.1"/>
    <property type="molecule type" value="Genomic_DNA"/>
</dbReference>
<dbReference type="RefSeq" id="WP_011138761.1">
    <property type="nucleotide sequence ID" value="NC_005090.1"/>
</dbReference>
<dbReference type="SMR" id="Q7M9K3"/>
<dbReference type="STRING" id="273121.WS0854"/>
<dbReference type="KEGG" id="wsu:WS0854"/>
<dbReference type="eggNOG" id="COG0456">
    <property type="taxonomic scope" value="Bacteria"/>
</dbReference>
<dbReference type="HOGENOM" id="CLU_111896_0_0_7"/>
<dbReference type="UniPathway" id="UPA00067">
    <property type="reaction ID" value="UER00122"/>
</dbReference>
<dbReference type="Proteomes" id="UP000000422">
    <property type="component" value="Chromosome"/>
</dbReference>
<dbReference type="GO" id="GO:0033816">
    <property type="term" value="F:diaminobutyrate acetyltransferase activity"/>
    <property type="evidence" value="ECO:0007669"/>
    <property type="project" value="UniProtKB-EC"/>
</dbReference>
<dbReference type="GO" id="GO:0019491">
    <property type="term" value="P:ectoine biosynthetic process"/>
    <property type="evidence" value="ECO:0007669"/>
    <property type="project" value="UniProtKB-UniPathway"/>
</dbReference>
<dbReference type="CDD" id="cd04301">
    <property type="entry name" value="NAT_SF"/>
    <property type="match status" value="1"/>
</dbReference>
<dbReference type="Gene3D" id="3.40.630.30">
    <property type="match status" value="1"/>
</dbReference>
<dbReference type="InterPro" id="IPR016181">
    <property type="entry name" value="Acyl_CoA_acyltransferase"/>
</dbReference>
<dbReference type="InterPro" id="IPR012772">
    <property type="entry name" value="Ectoine_EctA"/>
</dbReference>
<dbReference type="InterPro" id="IPR000182">
    <property type="entry name" value="GNAT_dom"/>
</dbReference>
<dbReference type="NCBIfam" id="TIGR02406">
    <property type="entry name" value="ectoine_EctA"/>
    <property type="match status" value="1"/>
</dbReference>
<dbReference type="Pfam" id="PF00583">
    <property type="entry name" value="Acetyltransf_1"/>
    <property type="match status" value="1"/>
</dbReference>
<dbReference type="SUPFAM" id="SSF55729">
    <property type="entry name" value="Acyl-CoA N-acyltransferases (Nat)"/>
    <property type="match status" value="1"/>
</dbReference>
<dbReference type="PROSITE" id="PS51186">
    <property type="entry name" value="GNAT"/>
    <property type="match status" value="1"/>
</dbReference>
<proteinExistence type="inferred from homology"/>
<evidence type="ECO:0000250" key="1"/>
<evidence type="ECO:0000255" key="2">
    <source>
        <dbReference type="PROSITE-ProRule" id="PRU00532"/>
    </source>
</evidence>
<evidence type="ECO:0000305" key="3"/>
<comment type="function">
    <text evidence="1">Catalyzes the acetylation of L-2,4-diaminobutyrate (DABA) to gamma-N-acetyl-alpha,gamma-diaminobutyric acid (ADABA) with acetyl coenzyme A.</text>
</comment>
<comment type="catalytic activity">
    <reaction>
        <text>L-2,4-diaminobutanoate + acetyl-CoA = (2S)-4-acetamido-2-aminobutanoate + CoA + H(+)</text>
        <dbReference type="Rhea" id="RHEA:16901"/>
        <dbReference type="ChEBI" id="CHEBI:15378"/>
        <dbReference type="ChEBI" id="CHEBI:57287"/>
        <dbReference type="ChEBI" id="CHEBI:57288"/>
        <dbReference type="ChEBI" id="CHEBI:58761"/>
        <dbReference type="ChEBI" id="CHEBI:58929"/>
        <dbReference type="EC" id="2.3.1.178"/>
    </reaction>
</comment>
<comment type="pathway">
    <text>Amine and polyamine biosynthesis; ectoine biosynthesis; L-ectoine from L-aspartate 4-semialdehyde: step 2/3.</text>
</comment>
<comment type="similarity">
    <text evidence="3">Belongs to the acetyltransferase family. EctA subfamily.</text>
</comment>
<sequence>MFRPPSIKDAKKIWELIGRCKPLDINSPYCYALIGRDFFDSSIVYEEEGRIKGVVIGYLRPRAPERLFVWQVAIEAKSRGKGIAKRAIEAILKNLERKGHCIQAIEATYTPSNLASKALFHALGREWKVVWIEENFLEGALLSAQEAHEEEWLITLPFSSEALGVQGANHANL</sequence>
<name>ECTA_WOLSU</name>
<organism>
    <name type="scientific">Wolinella succinogenes (strain ATCC 29543 / DSM 1740 / CCUG 13145 / JCM 31913 / LMG 7466 / NCTC 11488 / FDC 602W)</name>
    <name type="common">Vibrio succinogenes</name>
    <dbReference type="NCBI Taxonomy" id="273121"/>
    <lineage>
        <taxon>Bacteria</taxon>
        <taxon>Pseudomonadati</taxon>
        <taxon>Campylobacterota</taxon>
        <taxon>Epsilonproteobacteria</taxon>
        <taxon>Campylobacterales</taxon>
        <taxon>Helicobacteraceae</taxon>
        <taxon>Wolinella</taxon>
    </lineage>
</organism>
<accession>Q7M9K3</accession>